<gene>
    <name type="primary">NPHS1</name>
    <name type="synonym">NPHN</name>
</gene>
<sequence length="1241" mass="134742">MALGTTLRASLLLLGLLTEGLAQLAIPASVPRGFWALPENLTVVEGASVELRCGVSTPGSAVQWAKDGLLLGPDPRIPGFPRYRLEGDPARGEFHLHIEACDLSDDAEYECQVGRSEMGPELVSPRVILSILVPPKLLLLTPEAGTMVTWVAGQEYVVNCVSGDAKPAPDITILLSGQTISDISANVNEGSQQKLFTVEATARVTPRSSDNRQLLVCEASSPALEAPIKASFTVNVLFPPGPPVIEWPGLDEGHVRAGQSLELPCVARGGNPLATLQWLKNGQPVSTAWGTEHTQAVARSVLVMTVRPEDHGAQLSCEAHNSVSAGTQEHGITLQVTFPPSAIIILGSASQTENKNVTLSCVSKSSRPRVLLRWWLGWRQLLPMEETVMDGLHGGHISMSNLTFLARREDNGLTLTCEAFSEAFTKETFKKSLILNVKYPAQKLWIEGPPEGQKLRAGTRVRLVCLAIGGNPEPSLMWYKDSRTVTESRLPQESRRVHLGSVEKSGSTFSRELVLVTGPSDNQAKFTCKAGQLSASTQLAVQFPPTNVTILANASALRPGDALNLTCVSVSSNPPVNLSWDKEGERLEGVAAPPRRAPFKGSAAARSVLLQVSSRDHGQRVTCRAHSAELRETVSSFYRLNVLYRPEFLGEQVLVVTAVEQGEALLPVSVSANPAPEAFNWTFRGYRLSPAGGPRHRILSSGALHLWNVTRADDGLYQLHCQNSEGTAEARLRLDVHYAPTIRALQDPTEVNVGGSVDIVCTVDANPILPGMFNWERLGEDEEDQSLDDMEKISRGPTGRLRIHHAKLAQAGAYQCIVDNGVAPPARRLLRLVVRFAPQVEHPTPLTKVAAAGDSTSSATLHCRARGVPNIVFTWTKNGVPLDLQDPRYTEHTYHQGGVHSSLLTIANVSAAQDYALFTCTATNALGSDQTNIQLVSISRPDPPSGLKVVSLTPHSVGLEWKPGFDGGLPQRFCIRYEALGTPGFHYVDVVPPQATTFTLTGLQPSTRYRVWLLASNALGDSGLADKGTQLPITTPGLHQPSGEPEDQLPTEPPSGPSGLPLLPVLFALGGLLLLSNASCVGGVLWQRRLRRLAEGISEKTEAGSEEDRVRNEYEESQWTGERDTQSSTVSTTEAEPYYRSLRDFSPQLPPTQEEVSYSRGFTGEDEDMAFPGHLYDEVERTYPPSGAWGPLYDEVQMGPWDLHWPEDTYQDPRGIYDQVAGDLDTLEPDSLPFELRGHLV</sequence>
<name>NPHN_HUMAN</name>
<evidence type="ECO:0000250" key="1">
    <source>
        <dbReference type="UniProtKB" id="Q9QZS7"/>
    </source>
</evidence>
<evidence type="ECO:0000250" key="2">
    <source>
        <dbReference type="UniProtKB" id="Q9R044"/>
    </source>
</evidence>
<evidence type="ECO:0000255" key="3"/>
<evidence type="ECO:0000255" key="4">
    <source>
        <dbReference type="PROSITE-ProRule" id="PRU00114"/>
    </source>
</evidence>
<evidence type="ECO:0000255" key="5">
    <source>
        <dbReference type="PROSITE-ProRule" id="PRU00316"/>
    </source>
</evidence>
<evidence type="ECO:0000256" key="6">
    <source>
        <dbReference type="SAM" id="MobiDB-lite"/>
    </source>
</evidence>
<evidence type="ECO:0000269" key="7">
    <source>
    </source>
</evidence>
<evidence type="ECO:0000269" key="8">
    <source>
    </source>
</evidence>
<evidence type="ECO:0000269" key="9">
    <source>
    </source>
</evidence>
<evidence type="ECO:0000269" key="10">
    <source>
    </source>
</evidence>
<evidence type="ECO:0000269" key="11">
    <source>
    </source>
</evidence>
<evidence type="ECO:0000269" key="12">
    <source>
    </source>
</evidence>
<evidence type="ECO:0000269" key="13">
    <source>
    </source>
</evidence>
<evidence type="ECO:0000269" key="14">
    <source>
    </source>
</evidence>
<evidence type="ECO:0000269" key="15">
    <source>
    </source>
</evidence>
<evidence type="ECO:0000269" key="16">
    <source>
    </source>
</evidence>
<evidence type="ECO:0000269" key="17">
    <source>
    </source>
</evidence>
<evidence type="ECO:0000269" key="18">
    <source>
    </source>
</evidence>
<evidence type="ECO:0000269" key="19">
    <source>
    </source>
</evidence>
<evidence type="ECO:0000269" key="20">
    <source>
    </source>
</evidence>
<evidence type="ECO:0000269" key="21">
    <source>
    </source>
</evidence>
<evidence type="ECO:0000269" key="22">
    <source>
    </source>
</evidence>
<evidence type="ECO:0000269" key="23">
    <source>
    </source>
</evidence>
<evidence type="ECO:0000269" key="24">
    <source>
    </source>
</evidence>
<evidence type="ECO:0000269" key="25">
    <source>
    </source>
</evidence>
<evidence type="ECO:0000269" key="26">
    <source>
    </source>
</evidence>
<evidence type="ECO:0000269" key="27">
    <source>
    </source>
</evidence>
<evidence type="ECO:0000303" key="28">
    <source>
    </source>
</evidence>
<evidence type="ECO:0000305" key="29"/>
<evidence type="ECO:0007744" key="30">
    <source>
    </source>
</evidence>
<dbReference type="EMBL" id="AF035835">
    <property type="protein sequence ID" value="AAC39687.1"/>
    <property type="molecule type" value="mRNA"/>
</dbReference>
<dbReference type="EMBL" id="EU642886">
    <property type="protein sequence ID" value="ACH99862.1"/>
    <property type="molecule type" value="mRNA"/>
</dbReference>
<dbReference type="EMBL" id="AF190637">
    <property type="protein sequence ID" value="AAG17141.1"/>
    <property type="molecule type" value="mRNA"/>
</dbReference>
<dbReference type="EMBL" id="AC002133">
    <property type="status" value="NOT_ANNOTATED_CDS"/>
    <property type="molecule type" value="Genomic_DNA"/>
</dbReference>
<dbReference type="EMBL" id="AF126957">
    <property type="protein sequence ID" value="AAF36451.1"/>
    <property type="molecule type" value="mRNA"/>
</dbReference>
<dbReference type="CCDS" id="CCDS32996.1">
    <molecule id="O60500-1"/>
</dbReference>
<dbReference type="PIR" id="T37190">
    <property type="entry name" value="T37190"/>
</dbReference>
<dbReference type="RefSeq" id="NP_004637.1">
    <molecule id="O60500-1"/>
    <property type="nucleotide sequence ID" value="NM_004646.4"/>
</dbReference>
<dbReference type="PDB" id="4ZRT">
    <property type="method" value="X-ray"/>
    <property type="resolution" value="1.74 A"/>
    <property type="chains" value="B=1188-1198"/>
</dbReference>
<dbReference type="PDBsum" id="4ZRT"/>
<dbReference type="SMR" id="O60500"/>
<dbReference type="BioGRID" id="110928">
    <property type="interactions" value="26"/>
</dbReference>
<dbReference type="DIP" id="DIP-36424N"/>
<dbReference type="ELM" id="O60500"/>
<dbReference type="FunCoup" id="O60500">
    <property type="interactions" value="136"/>
</dbReference>
<dbReference type="IntAct" id="O60500">
    <property type="interactions" value="17"/>
</dbReference>
<dbReference type="STRING" id="9606.ENSP00000368190"/>
<dbReference type="TCDB" id="8.A.23.1.33">
    <property type="family name" value="the basigin (basigin) family"/>
</dbReference>
<dbReference type="GlyCosmos" id="O60500">
    <property type="glycosylation" value="10 sites, No reported glycans"/>
</dbReference>
<dbReference type="GlyGen" id="O60500">
    <property type="glycosylation" value="11 sites"/>
</dbReference>
<dbReference type="iPTMnet" id="O60500"/>
<dbReference type="PhosphoSitePlus" id="O60500"/>
<dbReference type="BioMuta" id="NPHS1"/>
<dbReference type="jPOST" id="O60500"/>
<dbReference type="MassIVE" id="O60500"/>
<dbReference type="PaxDb" id="9606-ENSP00000368190"/>
<dbReference type="PeptideAtlas" id="O60500"/>
<dbReference type="ProteomicsDB" id="49436">
    <molecule id="O60500-1"/>
</dbReference>
<dbReference type="ProteomicsDB" id="49437">
    <molecule id="O60500-2"/>
</dbReference>
<dbReference type="Antibodypedia" id="29541">
    <property type="antibodies" value="744 antibodies from 40 providers"/>
</dbReference>
<dbReference type="DNASU" id="4868"/>
<dbReference type="Ensembl" id="ENST00000353632.6">
    <molecule id="O60500-2"/>
    <property type="protein sequence ID" value="ENSP00000343634.5"/>
    <property type="gene ID" value="ENSG00000161270.20"/>
</dbReference>
<dbReference type="Ensembl" id="ENST00000378910.10">
    <molecule id="O60500-1"/>
    <property type="protein sequence ID" value="ENSP00000368190.4"/>
    <property type="gene ID" value="ENSG00000161270.20"/>
</dbReference>
<dbReference type="GeneID" id="4868"/>
<dbReference type="KEGG" id="hsa:4868"/>
<dbReference type="MANE-Select" id="ENST00000378910.10">
    <property type="protein sequence ID" value="ENSP00000368190.4"/>
    <property type="RefSeq nucleotide sequence ID" value="NM_004646.4"/>
    <property type="RefSeq protein sequence ID" value="NP_004637.1"/>
</dbReference>
<dbReference type="UCSC" id="uc002oby.4">
    <molecule id="O60500-1"/>
    <property type="organism name" value="human"/>
</dbReference>
<dbReference type="AGR" id="HGNC:7908"/>
<dbReference type="CTD" id="4868"/>
<dbReference type="DisGeNET" id="4868"/>
<dbReference type="GeneCards" id="NPHS1"/>
<dbReference type="HGNC" id="HGNC:7908">
    <property type="gene designation" value="NPHS1"/>
</dbReference>
<dbReference type="HPA" id="ENSG00000161270">
    <property type="expression patterns" value="Group enriched (kidney, pancreas)"/>
</dbReference>
<dbReference type="MalaCards" id="NPHS1"/>
<dbReference type="MIM" id="256300">
    <property type="type" value="phenotype"/>
</dbReference>
<dbReference type="MIM" id="602716">
    <property type="type" value="gene"/>
</dbReference>
<dbReference type="neXtProt" id="NX_O60500"/>
<dbReference type="OpenTargets" id="ENSG00000161270"/>
<dbReference type="Orphanet" id="839">
    <property type="disease" value="Congenital nephrotic syndrome, Finnish type"/>
</dbReference>
<dbReference type="Orphanet" id="656">
    <property type="disease" value="Hereditary steroid-resistant nephrotic syndrome"/>
</dbReference>
<dbReference type="PharmGKB" id="PA31709"/>
<dbReference type="VEuPathDB" id="HostDB:ENSG00000161270"/>
<dbReference type="eggNOG" id="KOG3515">
    <property type="taxonomic scope" value="Eukaryota"/>
</dbReference>
<dbReference type="GeneTree" id="ENSGT00940000159510"/>
<dbReference type="HOGENOM" id="CLU_003881_0_1_1"/>
<dbReference type="InParanoid" id="O60500"/>
<dbReference type="OMA" id="IEGYSPG"/>
<dbReference type="OrthoDB" id="10028801at2759"/>
<dbReference type="PAN-GO" id="O60500">
    <property type="GO annotations" value="4 GO annotations based on evolutionary models"/>
</dbReference>
<dbReference type="PhylomeDB" id="O60500"/>
<dbReference type="TreeFam" id="TF327139"/>
<dbReference type="PathwayCommons" id="O60500"/>
<dbReference type="Reactome" id="R-HSA-373753">
    <property type="pathway name" value="Nephrin family interactions"/>
</dbReference>
<dbReference type="SignaLink" id="O60500"/>
<dbReference type="SIGNOR" id="O60500"/>
<dbReference type="BioGRID-ORCS" id="4868">
    <property type="hits" value="91 hits in 1147 CRISPR screens"/>
</dbReference>
<dbReference type="CD-CODE" id="170524B4">
    <property type="entry name" value="Synthetic Condensate 000168"/>
</dbReference>
<dbReference type="CD-CODE" id="17687E46">
    <property type="entry name" value="Synthetic Condensate 000078"/>
</dbReference>
<dbReference type="CD-CODE" id="589474B0">
    <property type="entry name" value="Synthetic Condensate 000287"/>
</dbReference>
<dbReference type="CD-CODE" id="6340D055">
    <property type="entry name" value="Synthetic Condensate 000071"/>
</dbReference>
<dbReference type="CD-CODE" id="84374B0C">
    <property type="entry name" value="Synthetic Condensate 000158"/>
</dbReference>
<dbReference type="CD-CODE" id="F345034F">
    <property type="entry name" value="Signaling cluster"/>
</dbReference>
<dbReference type="ChiTaRS" id="NPHS1">
    <property type="organism name" value="human"/>
</dbReference>
<dbReference type="EvolutionaryTrace" id="O60500"/>
<dbReference type="GeneWiki" id="Nephrin"/>
<dbReference type="GenomeRNAi" id="4868"/>
<dbReference type="Pharos" id="O60500">
    <property type="development level" value="Tbio"/>
</dbReference>
<dbReference type="PRO" id="PR:O60500"/>
<dbReference type="Proteomes" id="UP000005640">
    <property type="component" value="Chromosome 19"/>
</dbReference>
<dbReference type="RNAct" id="O60500">
    <property type="molecule type" value="protein"/>
</dbReference>
<dbReference type="Bgee" id="ENSG00000161270">
    <property type="expression patterns" value="Expressed in buccal mucosa cell and 118 other cell types or tissues"/>
</dbReference>
<dbReference type="GO" id="GO:0042995">
    <property type="term" value="C:cell projection"/>
    <property type="evidence" value="ECO:0007669"/>
    <property type="project" value="Ensembl"/>
</dbReference>
<dbReference type="GO" id="GO:0005911">
    <property type="term" value="C:cell-cell junction"/>
    <property type="evidence" value="ECO:0000318"/>
    <property type="project" value="GO_Central"/>
</dbReference>
<dbReference type="GO" id="GO:0070062">
    <property type="term" value="C:extracellular exosome"/>
    <property type="evidence" value="ECO:0007005"/>
    <property type="project" value="UniProtKB"/>
</dbReference>
<dbReference type="GO" id="GO:0005925">
    <property type="term" value="C:focal adhesion"/>
    <property type="evidence" value="ECO:0007669"/>
    <property type="project" value="Ensembl"/>
</dbReference>
<dbReference type="GO" id="GO:0005886">
    <property type="term" value="C:plasma membrane"/>
    <property type="evidence" value="ECO:0000314"/>
    <property type="project" value="UniProtKB"/>
</dbReference>
<dbReference type="GO" id="GO:0036057">
    <property type="term" value="C:slit diaphragm"/>
    <property type="evidence" value="ECO:0000250"/>
    <property type="project" value="UniProtKB"/>
</dbReference>
<dbReference type="GO" id="GO:0050839">
    <property type="term" value="F:cell adhesion molecule binding"/>
    <property type="evidence" value="ECO:0000318"/>
    <property type="project" value="GO_Central"/>
</dbReference>
<dbReference type="GO" id="GO:0017022">
    <property type="term" value="F:myosin binding"/>
    <property type="evidence" value="ECO:0000353"/>
    <property type="project" value="UniProtKB"/>
</dbReference>
<dbReference type="GO" id="GO:0098609">
    <property type="term" value="P:cell-cell adhesion"/>
    <property type="evidence" value="ECO:0000318"/>
    <property type="project" value="GO_Central"/>
</dbReference>
<dbReference type="GO" id="GO:0010467">
    <property type="term" value="P:gene expression"/>
    <property type="evidence" value="ECO:0007669"/>
    <property type="project" value="Ensembl"/>
</dbReference>
<dbReference type="GO" id="GO:0032836">
    <property type="term" value="P:glomerular basement membrane development"/>
    <property type="evidence" value="ECO:0000270"/>
    <property type="project" value="UniProtKB"/>
</dbReference>
<dbReference type="GO" id="GO:0007254">
    <property type="term" value="P:JNK cascade"/>
    <property type="evidence" value="ECO:0007669"/>
    <property type="project" value="Ensembl"/>
</dbReference>
<dbReference type="GO" id="GO:0007520">
    <property type="term" value="P:myoblast fusion"/>
    <property type="evidence" value="ECO:0007669"/>
    <property type="project" value="Ensembl"/>
</dbReference>
<dbReference type="GO" id="GO:0072015">
    <property type="term" value="P:podocyte development"/>
    <property type="evidence" value="ECO:0000270"/>
    <property type="project" value="UniProtKB"/>
</dbReference>
<dbReference type="GO" id="GO:0030838">
    <property type="term" value="P:positive regulation of actin filament polymerization"/>
    <property type="evidence" value="ECO:0007669"/>
    <property type="project" value="Ensembl"/>
</dbReference>
<dbReference type="GO" id="GO:0035418">
    <property type="term" value="P:protein localization to synapse"/>
    <property type="evidence" value="ECO:0000316"/>
    <property type="project" value="UniProtKB"/>
</dbReference>
<dbReference type="GO" id="GO:0007519">
    <property type="term" value="P:skeletal muscle tissue development"/>
    <property type="evidence" value="ECO:0007669"/>
    <property type="project" value="Ensembl"/>
</dbReference>
<dbReference type="GO" id="GO:0036060">
    <property type="term" value="P:slit diaphragm assembly"/>
    <property type="evidence" value="ECO:0000250"/>
    <property type="project" value="UniProtKB"/>
</dbReference>
<dbReference type="CDD" id="cd00063">
    <property type="entry name" value="FN3"/>
    <property type="match status" value="1"/>
</dbReference>
<dbReference type="CDD" id="cd05773">
    <property type="entry name" value="IgC1_hNephrin_like"/>
    <property type="match status" value="1"/>
</dbReference>
<dbReference type="FunFam" id="2.60.40.10:FF:000077">
    <property type="entry name" value="Kirre like nephrin family adhesion molecule 3"/>
    <property type="match status" value="1"/>
</dbReference>
<dbReference type="FunFam" id="2.60.40.10:FF:000405">
    <property type="entry name" value="nephrin isoform X1"/>
    <property type="match status" value="1"/>
</dbReference>
<dbReference type="FunFam" id="2.60.40.10:FF:000719">
    <property type="entry name" value="nephrin isoform X1"/>
    <property type="match status" value="1"/>
</dbReference>
<dbReference type="FunFam" id="2.60.40.10:FF:000853">
    <property type="entry name" value="NPHS1, nephrin"/>
    <property type="match status" value="1"/>
</dbReference>
<dbReference type="FunFam" id="2.60.40.10:FF:000895">
    <property type="entry name" value="NPHS1, nephrin"/>
    <property type="match status" value="1"/>
</dbReference>
<dbReference type="FunFam" id="2.60.40.10:FF:000960">
    <property type="entry name" value="NPHS1, nephrin"/>
    <property type="match status" value="1"/>
</dbReference>
<dbReference type="FunFam" id="2.60.40.10:FF:001122">
    <property type="entry name" value="NPHS1, nephrin"/>
    <property type="match status" value="1"/>
</dbReference>
<dbReference type="FunFam" id="2.60.40.10:FF:001158">
    <property type="entry name" value="NPHS1, nephrin"/>
    <property type="match status" value="1"/>
</dbReference>
<dbReference type="FunFam" id="2.60.40.10:FF:001339">
    <property type="entry name" value="NPHS1, nephrin"/>
    <property type="match status" value="1"/>
</dbReference>
<dbReference type="FunFam" id="2.60.40.10:FF:001740">
    <property type="entry name" value="NPHS1, nephrin"/>
    <property type="match status" value="1"/>
</dbReference>
<dbReference type="Gene3D" id="2.60.40.10">
    <property type="entry name" value="Immunoglobulins"/>
    <property type="match status" value="10"/>
</dbReference>
<dbReference type="InterPro" id="IPR013162">
    <property type="entry name" value="CD80_C2-set"/>
</dbReference>
<dbReference type="InterPro" id="IPR051275">
    <property type="entry name" value="Cell_adhesion_signaling"/>
</dbReference>
<dbReference type="InterPro" id="IPR003961">
    <property type="entry name" value="FN3_dom"/>
</dbReference>
<dbReference type="InterPro" id="IPR036116">
    <property type="entry name" value="FN3_sf"/>
</dbReference>
<dbReference type="InterPro" id="IPR007110">
    <property type="entry name" value="Ig-like_dom"/>
</dbReference>
<dbReference type="InterPro" id="IPR036179">
    <property type="entry name" value="Ig-like_dom_sf"/>
</dbReference>
<dbReference type="InterPro" id="IPR013783">
    <property type="entry name" value="Ig-like_fold"/>
</dbReference>
<dbReference type="InterPro" id="IPR013098">
    <property type="entry name" value="Ig_I-set"/>
</dbReference>
<dbReference type="InterPro" id="IPR003599">
    <property type="entry name" value="Ig_sub"/>
</dbReference>
<dbReference type="InterPro" id="IPR003598">
    <property type="entry name" value="Ig_sub2"/>
</dbReference>
<dbReference type="InterPro" id="IPR013106">
    <property type="entry name" value="Ig_V-set"/>
</dbReference>
<dbReference type="PANTHER" id="PTHR11640:SF31">
    <property type="entry name" value="IRREGULAR CHIASM C-ROUGHEST PROTEIN-RELATED"/>
    <property type="match status" value="1"/>
</dbReference>
<dbReference type="PANTHER" id="PTHR11640">
    <property type="entry name" value="NEPHRIN"/>
    <property type="match status" value="1"/>
</dbReference>
<dbReference type="Pfam" id="PF08205">
    <property type="entry name" value="C2-set_2"/>
    <property type="match status" value="5"/>
</dbReference>
<dbReference type="Pfam" id="PF00041">
    <property type="entry name" value="fn3"/>
    <property type="match status" value="1"/>
</dbReference>
<dbReference type="Pfam" id="PF07679">
    <property type="entry name" value="I-set"/>
    <property type="match status" value="2"/>
</dbReference>
<dbReference type="Pfam" id="PF13927">
    <property type="entry name" value="Ig_3"/>
    <property type="match status" value="1"/>
</dbReference>
<dbReference type="Pfam" id="PF07686">
    <property type="entry name" value="V-set"/>
    <property type="match status" value="1"/>
</dbReference>
<dbReference type="SMART" id="SM00060">
    <property type="entry name" value="FN3"/>
    <property type="match status" value="1"/>
</dbReference>
<dbReference type="SMART" id="SM00409">
    <property type="entry name" value="IG"/>
    <property type="match status" value="8"/>
</dbReference>
<dbReference type="SMART" id="SM00408">
    <property type="entry name" value="IGc2"/>
    <property type="match status" value="7"/>
</dbReference>
<dbReference type="SUPFAM" id="SSF49265">
    <property type="entry name" value="Fibronectin type III"/>
    <property type="match status" value="1"/>
</dbReference>
<dbReference type="SUPFAM" id="SSF48726">
    <property type="entry name" value="Immunoglobulin"/>
    <property type="match status" value="9"/>
</dbReference>
<dbReference type="PROSITE" id="PS50853">
    <property type="entry name" value="FN3"/>
    <property type="match status" value="1"/>
</dbReference>
<dbReference type="PROSITE" id="PS50835">
    <property type="entry name" value="IG_LIKE"/>
    <property type="match status" value="7"/>
</dbReference>
<proteinExistence type="evidence at protein level"/>
<reference key="1">
    <citation type="journal article" date="1998" name="Mol. Cell">
        <title>Positionally cloned gene for a novel glomerular protein -- nephrin -- is mutated in congenital nephrotic syndrome.</title>
        <authorList>
            <person name="Kestilae M."/>
            <person name="Lenkkeri U."/>
            <person name="Maennikkoe M."/>
            <person name="Lamerdin J.E."/>
            <person name="McCready P."/>
            <person name="Putaala H."/>
            <person name="Ruotsalainen V."/>
            <person name="Morita T."/>
            <person name="Nissinen M."/>
            <person name="Herva R."/>
            <person name="Kashtan C.E."/>
            <person name="Peltonen L."/>
            <person name="Holmberg C."/>
            <person name="Olsen A."/>
            <person name="Tryggvason K."/>
        </authorList>
    </citation>
    <scope>NUCLEOTIDE SEQUENCE [MRNA] (ISOFORM 1)</scope>
    <scope>INVOLVEMENT IN NPHS1</scope>
</reference>
<reference key="2">
    <citation type="journal article" date="2009" name="Hum. Genet.">
        <title>Novel human pathological mutations. Gene symbol: NPHS1. Disease: congenital nephrotic syndrome, Finnish type.</title>
        <authorList>
            <person name="Tikhomirov E."/>
            <person name="Voznesenskaya T."/>
            <person name="Tsygin A."/>
        </authorList>
    </citation>
    <scope>NUCLEOTIDE SEQUENCE [MRNA] (ISOFORM 1)</scope>
    <scope>VARIANT LYS-117</scope>
</reference>
<reference key="3">
    <citation type="submission" date="1999-09" db="EMBL/GenBank/DDBJ databases">
        <title>Human nephrin (NPHS1) cDNA sequence.</title>
        <authorList>
            <person name="Grunkemeyer J.A."/>
            <person name="Kumar N."/>
            <person name="Kalluri R."/>
        </authorList>
    </citation>
    <scope>NUCLEOTIDE SEQUENCE [MRNA] (ISOFORM 1)</scope>
</reference>
<reference key="4">
    <citation type="journal article" date="2004" name="Nature">
        <title>The DNA sequence and biology of human chromosome 19.</title>
        <authorList>
            <person name="Grimwood J."/>
            <person name="Gordon L.A."/>
            <person name="Olsen A.S."/>
            <person name="Terry A."/>
            <person name="Schmutz J."/>
            <person name="Lamerdin J.E."/>
            <person name="Hellsten U."/>
            <person name="Goodstein D."/>
            <person name="Couronne O."/>
            <person name="Tran-Gyamfi M."/>
            <person name="Aerts A."/>
            <person name="Altherr M."/>
            <person name="Ashworth L."/>
            <person name="Bajorek E."/>
            <person name="Black S."/>
            <person name="Branscomb E."/>
            <person name="Caenepeel S."/>
            <person name="Carrano A.V."/>
            <person name="Caoile C."/>
            <person name="Chan Y.M."/>
            <person name="Christensen M."/>
            <person name="Cleland C.A."/>
            <person name="Copeland A."/>
            <person name="Dalin E."/>
            <person name="Dehal P."/>
            <person name="Denys M."/>
            <person name="Detter J.C."/>
            <person name="Escobar J."/>
            <person name="Flowers D."/>
            <person name="Fotopulos D."/>
            <person name="Garcia C."/>
            <person name="Georgescu A.M."/>
            <person name="Glavina T."/>
            <person name="Gomez M."/>
            <person name="Gonzales E."/>
            <person name="Groza M."/>
            <person name="Hammon N."/>
            <person name="Hawkins T."/>
            <person name="Haydu L."/>
            <person name="Ho I."/>
            <person name="Huang W."/>
            <person name="Israni S."/>
            <person name="Jett J."/>
            <person name="Kadner K."/>
            <person name="Kimball H."/>
            <person name="Kobayashi A."/>
            <person name="Larionov V."/>
            <person name="Leem S.-H."/>
            <person name="Lopez F."/>
            <person name="Lou Y."/>
            <person name="Lowry S."/>
            <person name="Malfatti S."/>
            <person name="Martinez D."/>
            <person name="McCready P.M."/>
            <person name="Medina C."/>
            <person name="Morgan J."/>
            <person name="Nelson K."/>
            <person name="Nolan M."/>
            <person name="Ovcharenko I."/>
            <person name="Pitluck S."/>
            <person name="Pollard M."/>
            <person name="Popkie A.P."/>
            <person name="Predki P."/>
            <person name="Quan G."/>
            <person name="Ramirez L."/>
            <person name="Rash S."/>
            <person name="Retterer J."/>
            <person name="Rodriguez A."/>
            <person name="Rogers S."/>
            <person name="Salamov A."/>
            <person name="Salazar A."/>
            <person name="She X."/>
            <person name="Smith D."/>
            <person name="Slezak T."/>
            <person name="Solovyev V."/>
            <person name="Thayer N."/>
            <person name="Tice H."/>
            <person name="Tsai M."/>
            <person name="Ustaszewska A."/>
            <person name="Vo N."/>
            <person name="Wagner M."/>
            <person name="Wheeler J."/>
            <person name="Wu K."/>
            <person name="Xie G."/>
            <person name="Yang J."/>
            <person name="Dubchak I."/>
            <person name="Furey T.S."/>
            <person name="DeJong P."/>
            <person name="Dickson M."/>
            <person name="Gordon D."/>
            <person name="Eichler E.E."/>
            <person name="Pennacchio L.A."/>
            <person name="Richardson P."/>
            <person name="Stubbs L."/>
            <person name="Rokhsar D.S."/>
            <person name="Myers R.M."/>
            <person name="Rubin E.M."/>
            <person name="Lucas S.M."/>
        </authorList>
    </citation>
    <scope>NUCLEOTIDE SEQUENCE [LARGE SCALE GENOMIC DNA]</scope>
</reference>
<reference key="5">
    <citation type="journal article" date="1999" name="Am. J. Pathol.">
        <title>Nephrin localizes at the podocyte filtration slit area and is characteristically spliced in the human kidney.</title>
        <authorList>
            <person name="Holthoefer H."/>
            <person name="Ahola H."/>
            <person name="Solin M.-L."/>
            <person name="Wang S.-X."/>
            <person name="Palmen T."/>
            <person name="Luimula P."/>
            <person name="Miettinen A."/>
            <person name="Kerjaschki D."/>
        </authorList>
    </citation>
    <scope>NUCLEOTIDE SEQUENCE [MRNA] OF 1032-1134 (ISOFORM 2)</scope>
    <scope>SUBCELLULAR LOCATION</scope>
</reference>
<reference key="6">
    <citation type="journal article" date="1999" name="Proc. Natl. Acad. Sci. U.S.A.">
        <title>Nephrin is specifically located at the slit diaphragm of glomerular podocytes.</title>
        <authorList>
            <person name="Ruotsalainen V."/>
            <person name="Ljungberg P."/>
            <person name="Wartiovaara J."/>
            <person name="Lenkkeri U."/>
            <person name="Kestilae M."/>
            <person name="Jalanko H."/>
            <person name="Holmberg C."/>
            <person name="Tryggvason K."/>
        </authorList>
    </citation>
    <scope>SUBCELLULAR LOCATION</scope>
</reference>
<reference key="7">
    <citation type="journal article" date="2001" name="J. Biol. Chem.">
        <title>Interaction with podocin facilitates nephrin signaling.</title>
        <authorList>
            <person name="Huber T.B."/>
            <person name="Kottgen M."/>
            <person name="Schilling B."/>
            <person name="Walz G."/>
            <person name="Benzing T."/>
        </authorList>
    </citation>
    <scope>INTERACTION WITH NPHS2</scope>
</reference>
<reference key="8">
    <citation type="journal article" date="2008" name="J. Proteome Res.">
        <title>Phosphoproteome of resting human platelets.</title>
        <authorList>
            <person name="Zahedi R.P."/>
            <person name="Lewandrowski U."/>
            <person name="Wiesner J."/>
            <person name="Wortelkamp S."/>
            <person name="Moebius J."/>
            <person name="Schuetz C."/>
            <person name="Walter U."/>
            <person name="Gambaryan S."/>
            <person name="Sickmann A."/>
        </authorList>
    </citation>
    <scope>PHOSPHORYLATION [LARGE SCALE ANALYSIS] AT SER-432</scope>
    <scope>IDENTIFICATION BY MASS SPECTROMETRY [LARGE SCALE ANALYSIS]</scope>
    <source>
        <tissue>Platelet</tissue>
    </source>
</reference>
<reference key="9">
    <citation type="journal article" date="2017" name="Sci. Rep.">
        <title>C1-Ten is a PTPase of nephrin, regulating podocyte hypertrophy through mTORC1 activation.</title>
        <authorList>
            <person name="Lee J."/>
            <person name="Koh A."/>
            <person name="Jeong H."/>
            <person name="Kim E."/>
            <person name="Ha T.S."/>
            <person name="Saleem M.A."/>
            <person name="Ryu S.H."/>
        </authorList>
    </citation>
    <scope>INTERACTION WITH PIK3R1</scope>
    <scope>PHOSPHORYLATION</scope>
    <scope>DEPHOSPHORYLATION</scope>
    <scope>MUTAGENESIS OF TYR-1138</scope>
</reference>
<reference key="10">
    <citation type="journal article" date="1999" name="Am. J. Hum. Genet.">
        <title>Structure of the gene for congenital nephrotic syndrome of the Finnish type (NPHS1) and characterization of mutations.</title>
        <authorList>
            <person name="Lenkkeri U."/>
            <person name="Maennikkoe M."/>
            <person name="McCready P."/>
            <person name="Lamerdin J."/>
            <person name="Gribouval O."/>
            <person name="Niaudet P.M."/>
            <person name="Antignac C.K."/>
            <person name="Kashtan C.E."/>
            <person name="Homberg C."/>
            <person name="Olsen A."/>
            <person name="Kestilae M."/>
            <person name="Tryggvason K."/>
        </authorList>
    </citation>
    <scope>VARIANTS LYS-117; GLN-408 AND SER-1077</scope>
    <scope>VARIANTS NPHS1 SER-64; ASN-171; THR-172 DEL; ASN-173; 205-THR--ARG-207 DELINS ILE; CYS-270; PRO-350; ARG-366; CYS-367; SER-368; VAL-376; TYR-465; PHE-528; GLN-610; PHE-623; CYS-724; CYS-743; TRP-802; PRO-802; ASP-806; CYS-831 AND CYS-1140</scope>
</reference>
<reference key="11">
    <citation type="journal article" date="2000" name="Kidney Int.">
        <title>Novel mutation in the nephrin gene of a Japanese patient with congenital nephrotic syndrome of the Finnish type.</title>
        <authorList>
            <person name="Aya K."/>
            <person name="Tanaka H."/>
            <person name="Seino Y."/>
        </authorList>
    </citation>
    <scope>VARIANT NPHS1 VAL-819</scope>
    <scope>VARIANT LYS-447</scope>
</reference>
<reference key="12">
    <citation type="journal article" date="2001" name="Hum. Mol. Genet.">
        <title>Defective nephrin trafficking caused by missense mutations in the NPHS1 gene: insight into the mechanisms of congenital nephrotic syndrome.</title>
        <authorList>
            <person name="Liu L."/>
            <person name="Done S.C."/>
            <person name="Khoshnoodi J."/>
            <person name="Bertorello A."/>
            <person name="Wartiovaara J."/>
            <person name="Berggren P.O."/>
            <person name="Tryggvason K."/>
        </authorList>
    </citation>
    <scope>CHARACTERIZATION OF VARIANTS NPHS1 SER-64; ASN-171; ASN-173; CYS-270; PRO-350; ARG-366; CYS-367; SER-368; VAL-376; TYR-465; PHE-528; GLN-610; PHE-623; CYS-724; CYS-743; TRP-802; PRO-802; ASP-806; CYS-831 AND CYS-1140</scope>
    <scope>CHARACTERIZATION OF VARIANT GLN-408</scope>
</reference>
<reference key="13">
    <citation type="journal article" date="2001" name="Hum. Mutat.">
        <title>Mutation spectrum in the nephrin gene (NPHS1) in congenital nephrotic syndrome.</title>
        <authorList>
            <person name="Beltcheva O."/>
            <person name="Martin P."/>
            <person name="Lenkkeri U."/>
            <person name="Tryggvason K."/>
        </authorList>
    </citation>
    <scope>VARIANTS NPHS1 SER-64; ASN-171; THR-172 DEL; ASN-173; CYS-270; PRO-350; ARG-366; CYS-367; LEU-368; SER-368; VAL-376; TRP-379; PHE-417; GLN-460; TYR-465; PHE-528; CYS-558; GLN-610; PHE-623; CYS-724; VAL-739; CYS-743; TRP-802; PRO-802; ASP-806; VAL-819 AND PHE-834</scope>
    <scope>VARIANTS LYS-117; ARG-264; GLN-408; LYS-447; ARG-617; ASP-725; VAL-851 AND SER-1077</scope>
</reference>
<reference key="14">
    <citation type="journal article" date="2007" name="Kidney Int.">
        <title>A familial childhood-onset relapsing nephrotic syndrome.</title>
        <authorList>
            <person name="Kitamura A."/>
            <person name="Tsukaguchi H."/>
            <person name="Hiramoto R."/>
            <person name="Shono A."/>
            <person name="Doi T."/>
            <person name="Kagami S."/>
            <person name="Iijima K."/>
        </authorList>
    </citation>
    <scope>VARIANTS NPHS1 ARG-265 AND MET-822</scope>
</reference>
<reference key="15">
    <citation type="journal article" date="2008" name="J. Am. Soc. Nephrol.">
        <title>Nephrin mutations can cause childhood-onset steroid-resistant nephrotic syndrome.</title>
        <authorList>
            <person name="Philippe A."/>
            <person name="Nevo F."/>
            <person name="Esquivel E.L."/>
            <person name="Reklaityte D."/>
            <person name="Gribouval O."/>
            <person name="Tete M.J."/>
            <person name="Loirat C."/>
            <person name="Dantal J."/>
            <person name="Fischbach M."/>
            <person name="Pouteil-Noble C."/>
            <person name="Decramer S."/>
            <person name="Hoehne M."/>
            <person name="Benzing T."/>
            <person name="Charbit M."/>
            <person name="Niaudet P."/>
            <person name="Antignac C."/>
        </authorList>
    </citation>
    <scope>VARIANTS NPHS1 VAL-96; THR-107; GLN-460; GLN-575; PRO-832 AND SER-976</scope>
    <scope>CHARACTERIZATION OF VARIANT NPHS1 PRO-832</scope>
</reference>
<reference key="16">
    <citation type="journal article" date="2008" name="Nephrol. Dial. Transplant.">
        <title>Thirteen novel NPHS1 mutations in a large cohort of children with congenital nephrotic syndrome.</title>
        <authorList>
            <person name="Heeringa S.F."/>
            <person name="Vlangos C.N."/>
            <person name="Chernin G."/>
            <person name="Hinkes B."/>
            <person name="Gbadegesin R."/>
            <person name="Liu J."/>
            <person name="Hoskins B.E."/>
            <person name="Ozaltin F."/>
            <person name="Hildebrandt F."/>
        </authorList>
    </citation>
    <scope>VARIANTS NPHS1 TRP-256; CYS-367; CYS-412; SER-519; ARG-569 AND GLY-709</scope>
</reference>
<reference key="17">
    <citation type="journal article" date="2010" name="Nephrol. Dial. Transplant.">
        <title>Nineteen novel NPHS1 mutations in a worldwide cohort of patients with congenital nephrotic syndrome (CNS).</title>
        <authorList>
            <person name="Schoeb D.S."/>
            <person name="Chernin G."/>
            <person name="Heeringa S.F."/>
            <person name="Matejas V."/>
            <person name="Held S."/>
            <person name="Vega-Warner V."/>
            <person name="Bockenhauer D."/>
            <person name="Vlangos C.N."/>
            <person name="Moorani K.N."/>
            <person name="Neuhaus T.J."/>
            <person name="Kari J.A."/>
            <person name="MacDonald J."/>
            <person name="Saisawat P."/>
            <person name="Ashraf S."/>
            <person name="Ovunc B."/>
            <person name="Zenker M."/>
            <person name="Hildebrandt F."/>
        </authorList>
    </citation>
    <scope>VARIANTS NPHS1 VAL-107; LEU-167; THR-172 DEL; 205-THR--ARG-207 DELINS ILE; CYS-299; HIS-340; GLU-347; PRO-350; ARG-366; CYS-367; TRP-407; GLN-460; CYS-558; ASN-572; GLY-586; ARG-587; PHE-623; LYS-673; CYS-681; CYS-743; PRO-910; SER-976 AND CYS-1140</scope>
    <scope>VARIANT GLN-408</scope>
</reference>
<reference key="18">
    <citation type="journal article" date="2011" name="Genet. Mol. Res.">
        <title>Two novel NPHS1 mutations in a Chinese family with congenital nephrotic syndrome.</title>
        <authorList>
            <person name="Wu L.Q."/>
            <person name="Hu J.J."/>
            <person name="Xue J.J."/>
            <person name="Liang D.S."/>
        </authorList>
    </citation>
    <scope>VARIANT NPHS1 THR-742</scope>
    <scope>VARIANT LYS-117</scope>
</reference>
<reference key="19">
    <citation type="journal article" date="2010" name="Clin. J. Am. Soc. Nephrol.">
        <title>Immunosuppression and renal outcome in congenital and pediatric steroid-resistant nephrotic syndrome.</title>
        <authorList>
            <person name="Buescher A.K."/>
            <person name="Kranz B."/>
            <person name="Buescher R."/>
            <person name="Hildebrandt F."/>
            <person name="Dworniczak B."/>
            <person name="Pennekamp P."/>
            <person name="Kuwertz-Broeking E."/>
            <person name="Wingen A.M."/>
            <person name="John U."/>
            <person name="Kemper M."/>
            <person name="Monnens L."/>
            <person name="Hoyer P.F."/>
            <person name="Weber S."/>
            <person name="Konrad M."/>
        </authorList>
    </citation>
    <scope>VARIANTS NPHS1 GLU-107; THR-172 DEL; ILE-188; 205-THR--ARG-207 DELINS ILE; SER-567; PHE-623; VAL-851 AND CYS-1096</scope>
</reference>
<reference key="20">
    <citation type="journal article" date="2012" name="Clin. Nephrol.">
        <title>Mutations in podocyte genes are a rare cause of primary FSGS associated with ESRD in adult patients.</title>
        <authorList>
            <person name="Buescher A.K."/>
            <person name="Konrad M."/>
            <person name="Nagel M."/>
            <person name="Witzke O."/>
            <person name="Kribben A."/>
            <person name="Hoyer P.F."/>
            <person name="Weber S."/>
        </authorList>
    </citation>
    <scope>VARIANTS NPHS1 LEU-368 AND CYS-412</scope>
</reference>
<reference key="21">
    <citation type="journal article" date="2012" name="Gene">
        <title>A spectrum of novel NPHS1 and NPHS2 gene mutations in pediatric nephrotic syndrome patients from Pakistan.</title>
        <authorList>
            <person name="Abid A."/>
            <person name="Khaliq S."/>
            <person name="Shahid S."/>
            <person name="Lanewala A."/>
            <person name="Mubarak M."/>
            <person name="Hashmi S."/>
            <person name="Kazi J."/>
            <person name="Masood T."/>
            <person name="Hafeez F."/>
            <person name="Naqvi S.A."/>
            <person name="Rizvi S.A."/>
            <person name="Mehdi S.Q."/>
        </authorList>
    </citation>
    <scope>VARIANTS NPHS1 ILE-188; LYS-189; PRO-237; TRP-256; ILE-294; ILE-608; THR-912; ASN-1016 AND VAL-1020</scope>
    <scope>VARIANTS ARG-264 AND GLN-408</scope>
</reference>
<reference key="22">
    <citation type="journal article" date="2013" name="J. Hum. Genet.">
        <title>A molecular genetic analysis of childhood nephrotic syndrome in a cohort of Saudi Arabian families.</title>
        <authorList>
            <person name="Al-Hamed M.H."/>
            <person name="Al-Sabban E."/>
            <person name="Al-Mojalli H."/>
            <person name="Al-Harbi N."/>
            <person name="Faqeih E."/>
            <person name="Al Shaya H."/>
            <person name="Alhasan K."/>
            <person name="Al-Hissi S."/>
            <person name="Rajab M."/>
            <person name="Edwards N."/>
            <person name="Al-Abbad A."/>
            <person name="Al-Hassoun I."/>
            <person name="Sayer J.A."/>
            <person name="Meyer B.F."/>
        </authorList>
    </citation>
    <scope>VARIANTS NPHS1 LEU-368; GLN-460 AND TRP-802</scope>
    <scope>VARIANT ARG-264</scope>
</reference>
<reference key="23">
    <citation type="journal article" date="2015" name="Eur. J. Hum. Genet.">
        <title>SIPA1L3 identified by linkage analysis and whole-exome sequencing as a novel gene for autosomal recessive congenital cataract.</title>
        <authorList>
            <person name="Evers C."/>
            <person name="Paramasivam N."/>
            <person name="Hinderhofer K."/>
            <person name="Fischer C."/>
            <person name="Granzow M."/>
            <person name="Schmidt-Bacher A."/>
            <person name="Eils R."/>
            <person name="Steinbeisser H."/>
            <person name="Schlesner M."/>
            <person name="Moog U."/>
        </authorList>
    </citation>
    <scope>VARIANT ARG-264</scope>
</reference>
<reference key="24">
    <citation type="journal article" date="2016" name="Nephrology">
        <title>NPHS1 gene mutations confirm congenital nephrotic syndrome in four Brazilian cases: a novel mutation is described.</title>
        <authorList>
            <person name="Guaragna M.S."/>
            <person name="Cleto T.L."/>
            <person name="Souza M.L."/>
            <person name="Lutaif A.C."/>
            <person name="de Castro L.C."/>
            <person name="Penido M.G."/>
            <person name="Maciel-Guerra A.T."/>
            <person name="Belangero V.M."/>
            <person name="Guerra-Junior G."/>
            <person name="De Mello M.P."/>
        </authorList>
    </citation>
    <scope>VARIANTS NPHS1 THR-172 DEL; ASN-446; HIS-711 AND MET-736</scope>
    <scope>VARIANTS ARG-264 AND SER-1077</scope>
</reference>
<comment type="function">
    <text evidence="1 2">Seems to play a role in the development or function of the kidney glomerular filtration barrier. Regulates glomerular vascular permeability. May anchor the podocyte slit diaphragm to the actin cytoskeleton. Plays a role in skeletal muscle formation through regulation of myoblast fusion (By similarity).</text>
</comment>
<comment type="subunit">
    <text evidence="1 2 11 25">Interacts with CD2AP (via C-terminal domain). Interacts with MAGI1 (via PDZ 2 and 3 domains) forming a tripartite complex with IGSF5/JAM4. Interacts with DDN; the interaction is direct. Self-associates (via the Ig-like domains). Also interacts (via the Ig-like domains) with KIRREL1/NEPH1 and KIRREL2; the interaction with KIRREL1 is dependent on KIRREL1 glycosylation. Interacts with KIRREL3. Forms a complex with ACTN4, CASK, IQGAP1, MAGI2, SPTAN1 and SPTBN1 (By similarity). Interacts with NPHS2 (PubMed:11562357). Interacts with phosphatidylinositol 3-kinase regulatory subunit PIK3R1; the interaction is reduced by high glucose levels (PubMed:28955049).</text>
</comment>
<comment type="interaction">
    <interactant intactId="EBI-996920">
        <id>O60500</id>
    </interactant>
    <interactant intactId="EBI-297509">
        <id>P46940</id>
        <label>IQGAP1</label>
    </interactant>
    <organismsDiffer>false</organismsDiffer>
    <experiments>5</experiments>
</comment>
<comment type="interaction">
    <interactant intactId="EBI-996920">
        <id>O60500</id>
    </interactant>
    <interactant intactId="EBI-389883">
        <id>P16333</id>
        <label>NCK1</label>
    </interactant>
    <organismsDiffer>false</organismsDiffer>
    <experiments>3</experiments>
</comment>
<comment type="subcellular location">
    <subcellularLocation>
        <location evidence="29">Cell membrane</location>
        <topology evidence="29">Single-pass type I membrane protein</topology>
    </subcellularLocation>
    <text evidence="7 8">Predominantly located at podocyte slit diaphragm between podocyte foot processes. Also associated with podocyte apical plasma membrane.</text>
</comment>
<comment type="alternative products">
    <event type="alternative splicing"/>
    <isoform>
        <id>O60500-1</id>
        <name>1</name>
        <sequence type="displayed"/>
    </isoform>
    <isoform>
        <id>O60500-2</id>
        <name>2</name>
        <name>Alpha</name>
        <sequence type="described" ref="VSP_002598"/>
    </isoform>
</comment>
<comment type="tissue specificity">
    <text>Specifically expressed in podocytes of kidney glomeruli.</text>
</comment>
<comment type="developmental stage">
    <text>In 23-week-old embryo found in epithelial podocytes of the periphery of mature and developing glomeruli.</text>
</comment>
<comment type="PTM">
    <text evidence="2 25">Phosphorylated at Tyr-1193 by FYN, leading to the recruitment and activation of phospholipase C-gamma-1/PLCG1 (By similarity). Tyrosine phosphorylation is reduced by high glucose levels (PubMed:28955049). Dephosphorylated by tensin TNS2 which leads to reduced binding of NPHN1 to PIK3R1 (PubMed:28955049).</text>
</comment>
<comment type="disease" evidence="9 10 12 13 14 15 17 18 19 20 21 22 24 26 27">
    <disease id="DI-01414">
        <name>Nephrotic syndrome 1</name>
        <acronym>NPHS1</acronym>
        <description>A form of nephrotic syndrome, a renal disease clinically characterized by severe proteinuria, resulting in complications such as hypoalbuminemia, hyperlipidemia and edema. Kidney biopsies show non-specific histologic changes such as focal segmental glomerulosclerosis and diffuse mesangial proliferation. Some affected individuals have an inherited steroid-resistant form and progress to end-stage renal failure.</description>
        <dbReference type="MIM" id="256300"/>
    </disease>
    <text>The disease is caused by variants affecting the gene represented in this entry.</text>
</comment>
<comment type="similarity">
    <text evidence="29">Belongs to the immunoglobulin superfamily.</text>
</comment>
<feature type="signal peptide" evidence="3">
    <location>
        <begin position="1"/>
        <end position="22"/>
    </location>
</feature>
<feature type="chain" id="PRO_0000015052" description="Nephrin">
    <location>
        <begin position="23"/>
        <end position="1241"/>
    </location>
</feature>
<feature type="topological domain" description="Extracellular" evidence="3">
    <location>
        <begin position="23"/>
        <end position="1055"/>
    </location>
</feature>
<feature type="transmembrane region" description="Helical" evidence="3">
    <location>
        <begin position="1056"/>
        <end position="1076"/>
    </location>
</feature>
<feature type="topological domain" description="Cytoplasmic" evidence="3">
    <location>
        <begin position="1077"/>
        <end position="1241"/>
    </location>
</feature>
<feature type="domain" description="Ig-like C2-type 1">
    <location>
        <begin position="27"/>
        <end position="130"/>
    </location>
</feature>
<feature type="domain" description="Ig-like C2-type 2">
    <location>
        <begin position="143"/>
        <end position="234"/>
    </location>
</feature>
<feature type="domain" description="Ig-like C2-type 3">
    <location>
        <begin position="242"/>
        <end position="333"/>
    </location>
</feature>
<feature type="domain" description="Ig-like C2-type 4">
    <location>
        <begin position="340"/>
        <end position="434"/>
    </location>
</feature>
<feature type="domain" description="Ig-like C2-type 5">
    <location>
        <begin position="440"/>
        <end position="540"/>
    </location>
</feature>
<feature type="domain" description="Ig-like C2-type 6">
    <location>
        <begin position="544"/>
        <end position="635"/>
    </location>
</feature>
<feature type="domain" description="Ig-like C2-type 7">
    <location>
        <begin position="740"/>
        <end position="832"/>
    </location>
</feature>
<feature type="domain" description="Ig-like C2-type 8">
    <location>
        <begin position="838"/>
        <end position="939"/>
    </location>
</feature>
<feature type="domain" description="Fibronectin type-III" evidence="5">
    <location>
        <begin position="943"/>
        <end position="1038"/>
    </location>
</feature>
<feature type="region of interest" description="Disordered" evidence="6">
    <location>
        <begin position="1025"/>
        <end position="1057"/>
    </location>
</feature>
<feature type="region of interest" description="Disordered" evidence="6">
    <location>
        <begin position="1099"/>
        <end position="1137"/>
    </location>
</feature>
<feature type="region of interest" description="Binds to NPHS2">
    <location>
        <begin position="1160"/>
        <end position="1241"/>
    </location>
</feature>
<feature type="compositionally biased region" description="Basic and acidic residues" evidence="6">
    <location>
        <begin position="1099"/>
        <end position="1114"/>
    </location>
</feature>
<feature type="modified residue" description="Phosphoserine" evidence="30">
    <location>
        <position position="432"/>
    </location>
</feature>
<feature type="modified residue" description="Phosphoserine" evidence="2">
    <location>
        <position position="1098"/>
    </location>
</feature>
<feature type="modified residue" description="Phosphothreonine" evidence="2">
    <location>
        <position position="1101"/>
    </location>
</feature>
<feature type="modified residue" description="Phosphoserine" evidence="2">
    <location>
        <position position="1105"/>
    </location>
</feature>
<feature type="modified residue" description="Phosphotyrosine; by FYN" evidence="2">
    <location>
        <position position="1193"/>
    </location>
</feature>
<feature type="glycosylation site" description="N-linked (GlcNAc...) asparagine" evidence="3">
    <location>
        <position position="40"/>
    </location>
</feature>
<feature type="glycosylation site" description="N-linked (GlcNAc...) asparagine" evidence="3">
    <location>
        <position position="356"/>
    </location>
</feature>
<feature type="glycosylation site" description="N-linked (GlcNAc...) asparagine" evidence="3">
    <location>
        <position position="401"/>
    </location>
</feature>
<feature type="glycosylation site" description="N-linked (GlcNAc...) asparagine" evidence="3">
    <location>
        <position position="547"/>
    </location>
</feature>
<feature type="glycosylation site" description="N-linked (GlcNAc...) asparagine" evidence="3">
    <location>
        <position position="553"/>
    </location>
</feature>
<feature type="glycosylation site" description="N-linked (GlcNAc...) asparagine" evidence="3">
    <location>
        <position position="564"/>
    </location>
</feature>
<feature type="glycosylation site" description="N-linked (GlcNAc...) asparagine" evidence="3">
    <location>
        <position position="577"/>
    </location>
</feature>
<feature type="glycosylation site" description="N-linked (GlcNAc...) asparagine" evidence="3">
    <location>
        <position position="680"/>
    </location>
</feature>
<feature type="glycosylation site" description="N-linked (GlcNAc...) asparagine" evidence="3">
    <location>
        <position position="708"/>
    </location>
</feature>
<feature type="glycosylation site" description="N-linked (GlcNAc...) asparagine" evidence="3">
    <location>
        <position position="908"/>
    </location>
</feature>
<feature type="disulfide bond" evidence="4">
    <location>
        <begin position="53"/>
        <end position="111"/>
    </location>
</feature>
<feature type="disulfide bond" evidence="4">
    <location>
        <begin position="160"/>
        <end position="217"/>
    </location>
</feature>
<feature type="disulfide bond" evidence="4">
    <location>
        <begin position="265"/>
        <end position="317"/>
    </location>
</feature>
<feature type="disulfide bond" evidence="4">
    <location>
        <begin position="361"/>
        <end position="417"/>
    </location>
</feature>
<feature type="disulfide bond" evidence="4">
    <location>
        <begin position="465"/>
        <end position="528"/>
    </location>
</feature>
<feature type="disulfide bond" evidence="4">
    <location>
        <begin position="567"/>
        <end position="623"/>
    </location>
</feature>
<feature type="disulfide bond" evidence="4">
    <location>
        <begin position="761"/>
        <end position="816"/>
    </location>
</feature>
<feature type="disulfide bond" evidence="4">
    <location>
        <begin position="863"/>
        <end position="920"/>
    </location>
</feature>
<feature type="splice variant" id="VSP_002598" description="In isoform 2." evidence="28">
    <location>
        <begin position="1056"/>
        <end position="1095"/>
    </location>
</feature>
<feature type="sequence variant" id="VAR_013029" description="In NPHS1; lack of protein expression on the cell surface; dbSNP:rs386833897." evidence="10 12 27">
    <original>W</original>
    <variation>S</variation>
    <location>
        <position position="64"/>
    </location>
</feature>
<feature type="sequence variant" id="VAR_064194" description="In NPHS1; dbSNP:rs386833929." evidence="15">
    <original>L</original>
    <variation>V</variation>
    <location>
        <position position="96"/>
    </location>
</feature>
<feature type="sequence variant" id="VAR_079794" description="In NPHS1; dbSNP:rs386833934." evidence="18">
    <original>A</original>
    <variation>E</variation>
    <location>
        <position position="107"/>
    </location>
</feature>
<feature type="sequence variant" id="VAR_064195" description="In NPHS1; dbSNP:rs386833933." evidence="15">
    <original>A</original>
    <variation>T</variation>
    <location>
        <position position="107"/>
    </location>
</feature>
<feature type="sequence variant" id="VAR_064196" description="In NPHS1; dbSNP:rs386833934." evidence="17">
    <original>A</original>
    <variation>V</variation>
    <location>
        <position position="107"/>
    </location>
</feature>
<feature type="sequence variant" id="VAR_013030" description="In dbSNP:rs3814995." evidence="10 16 19 27">
    <original>E</original>
    <variation>K</variation>
    <location>
        <position position="117"/>
    </location>
</feature>
<feature type="sequence variant" id="VAR_064197" description="In NPHS1; dbSNP:rs386833945." evidence="17">
    <original>P</original>
    <variation>L</variation>
    <location>
        <position position="167"/>
    </location>
</feature>
<feature type="sequence variant" id="VAR_013031" description="In NPHS1; lack of protein expression on the cell surface; dbSNP:rs386833946." evidence="10 12 27">
    <original>I</original>
    <variation>N</variation>
    <location>
        <position position="171"/>
    </location>
</feature>
<feature type="sequence variant" id="VAR_013032" description="In NPHS1." evidence="10 17 18 24 27">
    <location>
        <position position="172"/>
    </location>
</feature>
<feature type="sequence variant" id="VAR_013033" description="In NPHS1; lack of protein expression on the cell surface; dbSNP:rs386833949." evidence="10 12 27">
    <original>I</original>
    <variation>N</variation>
    <location>
        <position position="173"/>
    </location>
</feature>
<feature type="sequence variant" id="VAR_072375" description="In NPHS1; dbSNP:rs145125791." evidence="18 20">
    <original>N</original>
    <variation>I</variation>
    <location>
        <position position="188"/>
    </location>
</feature>
<feature type="sequence variant" id="VAR_072376" description="In NPHS1; dbSNP:rs139598219." evidence="20">
    <original>E</original>
    <variation>K</variation>
    <location>
        <position position="189"/>
    </location>
</feature>
<feature type="sequence variant" id="VAR_013034" description="In NPHS1." evidence="17 18 27">
    <original>TPR</original>
    <variation>I</variation>
    <location>
        <begin position="205"/>
        <end position="207"/>
    </location>
</feature>
<feature type="sequence variant" id="VAR_049970" description="In dbSNP:rs35238405.">
    <original>T</original>
    <variation>A</variation>
    <location>
        <position position="233"/>
    </location>
</feature>
<feature type="sequence variant" id="VAR_072161" description="In NPHS1; dbSNP:rs373835033." evidence="20">
    <original>L</original>
    <variation>P</variation>
    <location>
        <position position="237"/>
    </location>
</feature>
<feature type="sequence variant" id="VAR_064198" description="In NPHS1; dbSNP:rs386833960." evidence="14 20">
    <original>R</original>
    <variation>W</variation>
    <location>
        <position position="256"/>
    </location>
</feature>
<feature type="sequence variant" id="VAR_064199" description="In dbSNP:rs34982899." evidence="10 20 22 23 24">
    <original>P</original>
    <variation>R</variation>
    <location>
        <position position="264"/>
    </location>
</feature>
<feature type="sequence variant" id="VAR_064200" description="In NPHS1; dbSNP:rs267606917." evidence="13">
    <original>C</original>
    <variation>R</variation>
    <location>
        <position position="265"/>
    </location>
</feature>
<feature type="sequence variant" id="VAR_013035" description="In NPHS1; lack of protein expression on the cell surface; dbSNP:rs386833961." evidence="10 12 27">
    <original>G</original>
    <variation>C</variation>
    <location>
        <position position="270"/>
    </location>
</feature>
<feature type="sequence variant" id="VAR_072377" description="In NPHS1; benign; dbSNP:rs113825926." evidence="20">
    <original>T</original>
    <variation>I</variation>
    <location>
        <position position="294"/>
    </location>
</feature>
<feature type="sequence variant" id="VAR_064201" description="In NPHS1; dbSNP:rs753476209." evidence="17">
    <original>R</original>
    <variation>C</variation>
    <location>
        <position position="299"/>
    </location>
</feature>
<feature type="sequence variant" id="VAR_064202" description="In NPHS1; dbSNP:rs386833861." evidence="17">
    <original>P</original>
    <variation>H</variation>
    <location>
        <position position="340"/>
    </location>
</feature>
<feature type="sequence variant" id="VAR_064203" description="In NPHS1; dbSNP:rs386833862." evidence="17">
    <original>G</original>
    <variation>E</variation>
    <location>
        <position position="347"/>
    </location>
</feature>
<feature type="sequence variant" id="VAR_013036" description="In NPHS1; lack of protein expression on the cell surface; dbSNP:rs386833863." evidence="10 12 17 27">
    <original>S</original>
    <variation>P</variation>
    <location>
        <position position="350"/>
    </location>
</feature>
<feature type="sequence variant" id="VAR_013037" description="In NPHS1; lack of protein expression on the cell surface; the mutant protein is retained in the endoplasmic reticulum; dbSNP:rs386833864." evidence="10 12 17 27">
    <original>S</original>
    <variation>R</variation>
    <location>
        <position position="366"/>
    </location>
</feature>
<feature type="sequence variant" id="VAR_013038" description="In NPHS1; lack of protein expression on the cell surface; dbSNP:rs386833865." evidence="10 12 14 17 27">
    <original>R</original>
    <variation>C</variation>
    <location>
        <position position="367"/>
    </location>
</feature>
<feature type="sequence variant" id="VAR_064204" description="In NPHS1; dbSNP:rs386833867." evidence="10 21 22">
    <original>P</original>
    <variation>L</variation>
    <location>
        <position position="368"/>
    </location>
</feature>
<feature type="sequence variant" id="VAR_013039" description="In NPHS1; lack of protein expression on the cell surface; dbSNP:rs386833866." evidence="10 12 27">
    <original>P</original>
    <variation>S</variation>
    <location>
        <position position="368"/>
    </location>
</feature>
<feature type="sequence variant" id="VAR_013040" description="In NPHS1; does not affect protein expression on the cell surface; dbSNP:rs386833868." evidence="10 12 27">
    <original>L</original>
    <variation>V</variation>
    <location>
        <position position="376"/>
    </location>
</feature>
<feature type="sequence variant" id="VAR_064205" description="In NPHS1; dbSNP:rs386833871." evidence="10">
    <original>R</original>
    <variation>W</variation>
    <location>
        <position position="379"/>
    </location>
</feature>
<feature type="sequence variant" id="VAR_049971" description="In dbSNP:rs34320609.">
    <original>L</original>
    <variation>P</variation>
    <location>
        <position position="392"/>
    </location>
</feature>
<feature type="sequence variant" id="VAR_064206" description="In NPHS1; dbSNP:rs386833874." evidence="17">
    <original>R</original>
    <variation>W</variation>
    <location>
        <position position="407"/>
    </location>
</feature>
<feature type="sequence variant" id="VAR_013041" description="Does not affect protein expression on the cell surface; dbSNP:rs33950747." evidence="10 12 17 20 27">
    <original>R</original>
    <variation>Q</variation>
    <location>
        <position position="408"/>
    </location>
</feature>
<feature type="sequence variant" id="VAR_064207" description="In NPHS1; dbSNP:rs142008044." evidence="14 21">
    <original>G</original>
    <variation>C</variation>
    <location>
        <position position="412"/>
    </location>
</feature>
<feature type="sequence variant" id="VAR_064208" description="In NPHS1; dbSNP:rs386833875." evidence="10">
    <original>C</original>
    <variation>F</variation>
    <location>
        <position position="417"/>
    </location>
</feature>
<feature type="sequence variant" id="VAR_075252" description="In NPHS1; uncertain significance; dbSNP:rs386833879." evidence="24">
    <original>I</original>
    <variation>N</variation>
    <location>
        <position position="446"/>
    </location>
</feature>
<feature type="sequence variant" id="VAR_013042" description="In dbSNP:rs28939695." evidence="9 10">
    <original>E</original>
    <variation>K</variation>
    <location>
        <position position="447"/>
    </location>
</feature>
<feature type="sequence variant" id="VAR_064209" description="In NPHS1; dbSNP:rs386833880." evidence="10 15 17 22">
    <original>R</original>
    <variation>Q</variation>
    <location>
        <position position="460"/>
    </location>
</feature>
<feature type="sequence variant" id="VAR_013043" description="In NPHS1; lack of protein expression on the cell surface; dbSNP:rs386833881." evidence="10 12 27">
    <original>C</original>
    <variation>Y</variation>
    <location>
        <position position="465"/>
    </location>
</feature>
<feature type="sequence variant" id="VAR_064210" description="In NPHS1; dbSNP:rs386833884." evidence="14">
    <original>P</original>
    <variation>S</variation>
    <location>
        <position position="519"/>
    </location>
</feature>
<feature type="sequence variant" id="VAR_013044" description="In NPHS1; lack of protein expression on the cell surface; dbSNP:rs386833885." evidence="10 12 27">
    <original>C</original>
    <variation>F</variation>
    <location>
        <position position="528"/>
    </location>
</feature>
<feature type="sequence variant" id="VAR_064211" description="In NPHS1; dbSNP:rs386833886." evidence="10 17">
    <original>R</original>
    <variation>C</variation>
    <location>
        <position position="558"/>
    </location>
</feature>
<feature type="sequence variant" id="VAR_079795" description="In NPHS1; dbSNP:rs1468337078." evidence="18">
    <original>C</original>
    <variation>S</variation>
    <location>
        <position position="567"/>
    </location>
</feature>
<feature type="sequence variant" id="VAR_064212" description="In NPHS1; dbSNP:rs386833888." evidence="14">
    <original>S</original>
    <variation>R</variation>
    <location>
        <position position="569"/>
    </location>
</feature>
<feature type="sequence variant" id="VAR_064213" description="In NPHS1; dbSNP:rs386833889." evidence="17">
    <original>S</original>
    <variation>N</variation>
    <location>
        <position position="572"/>
    </location>
</feature>
<feature type="sequence variant" id="VAR_064214" description="In NPHS1; dbSNP:rs386833890." evidence="15">
    <original>P</original>
    <variation>Q</variation>
    <location>
        <position position="575"/>
    </location>
</feature>
<feature type="sequence variant" id="VAR_064215" description="In NPHS1; dbSNP:rs730880174." evidence="17">
    <original>R</original>
    <variation>G</variation>
    <location>
        <position position="586"/>
    </location>
</feature>
<feature type="sequence variant" id="VAR_064216" description="In NPHS1; dbSNP:rs386833892." evidence="17">
    <original>L</original>
    <variation>R</variation>
    <location>
        <position position="587"/>
    </location>
</feature>
<feature type="sequence variant" id="VAR_072378" description="In NPHS1; dbSNP:rs367976914." evidence="20">
    <original>V</original>
    <variation>I</variation>
    <location>
        <position position="608"/>
    </location>
</feature>
<feature type="sequence variant" id="VAR_013045" description="In NPHS1; lack of protein expression on the cell surface; dbSNP:rs386833894." evidence="10 12 27">
    <original>L</original>
    <variation>Q</variation>
    <location>
        <position position="610"/>
    </location>
</feature>
<feature type="sequence variant" id="VAR_064217" description="Found in patients with nephrotic syndrome; uncertain significance; dbSNP:rs764058957." evidence="10">
    <original>H</original>
    <variation>R</variation>
    <location>
        <position position="617"/>
    </location>
</feature>
<feature type="sequence variant" id="VAR_013046" description="In NPHS1; lack of protein expression on the cell surface; dbSNP:rs386833895." evidence="10 12 17 18 27">
    <original>C</original>
    <variation>F</variation>
    <location>
        <position position="623"/>
    </location>
</feature>
<feature type="sequence variant" id="VAR_064218" description="In NPHS1; dbSNP:rs191807913." evidence="17">
    <original>N</original>
    <variation>K</variation>
    <location>
        <position position="673"/>
    </location>
</feature>
<feature type="sequence variant" id="VAR_064219" description="In NPHS1; dbSNP:rs386833900." evidence="17">
    <original>W</original>
    <variation>C</variation>
    <location>
        <position position="681"/>
    </location>
</feature>
<feature type="sequence variant" id="VAR_064220" description="In NPHS1; dbSNP:rs386833902." evidence="14">
    <original>V</original>
    <variation>G</variation>
    <location>
        <position position="709"/>
    </location>
</feature>
<feature type="sequence variant" id="VAR_075253" description="In NPHS1; uncertain significance; dbSNP:rs926025297." evidence="24">
    <original>R</original>
    <variation>H</variation>
    <location>
        <position position="711"/>
    </location>
</feature>
<feature type="sequence variant" id="VAR_013047" description="In NPHS1; does not affect protein expression on the cell surface; dbSNP:rs386833905." evidence="10 12 27">
    <original>S</original>
    <variation>C</variation>
    <location>
        <position position="724"/>
    </location>
</feature>
<feature type="sequence variant" id="VAR_064221" description="Found in patients with nephrotic syndrome; uncertain significance." evidence="10">
    <original>E</original>
    <variation>D</variation>
    <location>
        <position position="725"/>
    </location>
</feature>
<feature type="sequence variant" id="VAR_075254" description="In NPHS1; uncertain significance; dbSNP:rs1131692245." evidence="24">
    <original>V</original>
    <variation>M</variation>
    <location>
        <position position="736"/>
    </location>
</feature>
<feature type="sequence variant" id="VAR_064222" description="In NPHS1; dbSNP:rs386833907." evidence="10">
    <original>A</original>
    <variation>V</variation>
    <location>
        <position position="739"/>
    </location>
</feature>
<feature type="sequence variant" id="VAR_067252" description="In NPHS1; dbSNP:rs386833908." evidence="19">
    <original>I</original>
    <variation>T</variation>
    <location>
        <position position="742"/>
    </location>
</feature>
<feature type="sequence variant" id="VAR_013048" description="In NPHS1; does not affect protein expression on the cell surface; dbSNP:rs386833909." evidence="10 12 17 27">
    <original>R</original>
    <variation>C</variation>
    <location>
        <position position="743"/>
    </location>
</feature>
<feature type="sequence variant" id="VAR_013050" description="In NPHS1; lack of protein expression on the cell surface; dbSNP:rs114203578." evidence="10 12 27">
    <original>R</original>
    <variation>P</variation>
    <location>
        <position position="802"/>
    </location>
</feature>
<feature type="sequence variant" id="VAR_013049" description="In NPHS1; lack of protein expression on the cell surface; dbSNP:rs386833911." evidence="10 12 22 27">
    <original>R</original>
    <variation>W</variation>
    <location>
        <position position="802"/>
    </location>
</feature>
<feature type="sequence variant" id="VAR_013051" description="In NPHS1; lack of protein expression on the cell surface; dbSNP:rs386833912." evidence="10 12 27">
    <original>A</original>
    <variation>D</variation>
    <location>
        <position position="806"/>
    </location>
</feature>
<feature type="sequence variant" id="VAR_013052" description="In NPHS1; dbSNP:rs387906357." evidence="9 10">
    <original>D</original>
    <variation>V</variation>
    <location>
        <position position="819"/>
    </location>
</feature>
<feature type="sequence variant" id="VAR_064223" description="In NPHS1; dbSNP:rs267606918." evidence="13">
    <original>V</original>
    <variation>M</variation>
    <location>
        <position position="822"/>
    </location>
</feature>
<feature type="sequence variant" id="VAR_013053" description="In NPHS1; lack of protein expression on the cell surface; dbSNP:rs386833915." evidence="12 27">
    <original>R</original>
    <variation>C</variation>
    <location>
        <position position="831"/>
    </location>
</feature>
<feature type="sequence variant" id="VAR_064224" description="In NPHS1; the mutant protein is retained in the endoplasmic reticulum; dbSNP:rs386833916." evidence="15">
    <original>L</original>
    <variation>P</variation>
    <location>
        <position position="832"/>
    </location>
</feature>
<feature type="sequence variant" id="VAR_064225" description="In NPHS1; dbSNP:rs386833917." evidence="10">
    <original>V</original>
    <variation>F</variation>
    <location>
        <position position="834"/>
    </location>
</feature>
<feature type="sequence variant" id="VAR_064226" description="In NPHS1; uncertain significance." evidence="10 18">
    <original>A</original>
    <variation>V</variation>
    <location>
        <position position="851"/>
    </location>
</feature>
<feature type="sequence variant" id="VAR_064227" description="In NPHS1; dbSNP:rs143649022." evidence="17">
    <original>S</original>
    <variation>P</variation>
    <location>
        <position position="910"/>
    </location>
</feature>
<feature type="sequence variant" id="VAR_072162" description="In NPHS1; dbSNP:rs763162233." evidence="20">
    <original>A</original>
    <variation>T</variation>
    <location>
        <position position="912"/>
    </location>
</feature>
<feature type="sequence variant" id="VAR_064228" description="In NPHS1; dbSNP:rs138656762." evidence="15 17">
    <original>R</original>
    <variation>S</variation>
    <location>
        <position position="976"/>
    </location>
</feature>
<feature type="sequence variant" id="VAR_049972" description="In dbSNP:rs34736717.">
    <original>V</original>
    <variation>L</variation>
    <location>
        <position position="991"/>
    </location>
</feature>
<feature type="sequence variant" id="VAR_072379" description="In NPHS1; dbSNP:rs367986918." evidence="20">
    <original>S</original>
    <variation>N</variation>
    <location>
        <position position="1016"/>
    </location>
</feature>
<feature type="sequence variant" id="VAR_072163" description="In NPHS1; dbSNP:rs749003854." evidence="20">
    <original>G</original>
    <variation>V</variation>
    <location>
        <position position="1020"/>
    </location>
</feature>
<feature type="sequence variant" id="VAR_013054" description="In dbSNP:rs4806213." evidence="10 24 27">
    <original>N</original>
    <variation>S</variation>
    <location>
        <position position="1077"/>
    </location>
</feature>
<feature type="sequence variant" id="VAR_079796" description="In NPHS1; uncertain significance." evidence="18">
    <original>G</original>
    <variation>C</variation>
    <location>
        <position position="1096"/>
    </location>
</feature>
<feature type="sequence variant" id="VAR_013055" description="In NPHS1; does not affect protein expression on the cell surface; dbSNP:rs143092783." evidence="12 17 27">
    <original>R</original>
    <variation>C</variation>
    <location>
        <position position="1140"/>
    </location>
</feature>
<feature type="mutagenesis site" description="Increased mTORC1 complex activation." evidence="25">
    <original>Y</original>
    <variation>F</variation>
    <location>
        <position position="1138"/>
    </location>
</feature>
<protein>
    <recommendedName>
        <fullName>Nephrin</fullName>
    </recommendedName>
    <alternativeName>
        <fullName>Renal glomerulus-specific cell adhesion receptor</fullName>
    </alternativeName>
</protein>
<organism>
    <name type="scientific">Homo sapiens</name>
    <name type="common">Human</name>
    <dbReference type="NCBI Taxonomy" id="9606"/>
    <lineage>
        <taxon>Eukaryota</taxon>
        <taxon>Metazoa</taxon>
        <taxon>Chordata</taxon>
        <taxon>Craniata</taxon>
        <taxon>Vertebrata</taxon>
        <taxon>Euteleostomi</taxon>
        <taxon>Mammalia</taxon>
        <taxon>Eutheria</taxon>
        <taxon>Euarchontoglires</taxon>
        <taxon>Primates</taxon>
        <taxon>Haplorrhini</taxon>
        <taxon>Catarrhini</taxon>
        <taxon>Hominidae</taxon>
        <taxon>Homo</taxon>
    </lineage>
</organism>
<keyword id="KW-0002">3D-structure</keyword>
<keyword id="KW-0025">Alternative splicing</keyword>
<keyword id="KW-0130">Cell adhesion</keyword>
<keyword id="KW-1003">Cell membrane</keyword>
<keyword id="KW-0217">Developmental protein</keyword>
<keyword id="KW-0225">Disease variant</keyword>
<keyword id="KW-1015">Disulfide bond</keyword>
<keyword id="KW-0325">Glycoprotein</keyword>
<keyword id="KW-0393">Immunoglobulin domain</keyword>
<keyword id="KW-0472">Membrane</keyword>
<keyword id="KW-0517">Myogenesis</keyword>
<keyword id="KW-0597">Phosphoprotein</keyword>
<keyword id="KW-1267">Proteomics identification</keyword>
<keyword id="KW-1185">Reference proteome</keyword>
<keyword id="KW-0677">Repeat</keyword>
<keyword id="KW-0732">Signal</keyword>
<keyword id="KW-0812">Transmembrane</keyword>
<keyword id="KW-1133">Transmembrane helix</keyword>
<accession>O60500</accession>
<accession>A6NDH2</accession>
<accession>C3RX61</accession>